<protein>
    <recommendedName>
        <fullName evidence="1">Large ribosomal subunit protein uL14</fullName>
    </recommendedName>
    <alternativeName>
        <fullName evidence="2">50S ribosomal protein L14</fullName>
    </alternativeName>
</protein>
<reference key="1">
    <citation type="submission" date="2006-05" db="EMBL/GenBank/DDBJ databases">
        <authorList>
            <consortium name="Genoscope"/>
        </authorList>
    </citation>
    <scope>NUCLEOTIDE SEQUENCE [LARGE SCALE GENOMIC DNA]</scope>
    <source>
        <strain>WH7803</strain>
    </source>
</reference>
<proteinExistence type="inferred from homology"/>
<accession>A5GIT5</accession>
<gene>
    <name evidence="1" type="primary">rplN</name>
    <name evidence="1" type="synonym">rpl14</name>
    <name type="ordered locus">SynWH7803_0424</name>
</gene>
<name>RL14_SYNPW</name>
<sequence>MIQQESFLTVADNSGAKRIQCIRVLGTNRRYAHVGDVIVAAVKDAMPNMGVKKSDVVKAVVVRTKATLRRDTGNSIRFDDNAAVIINDDKNPKGTRVFGPVARELRERNFTKIVSLAPEVI</sequence>
<organism>
    <name type="scientific">Synechococcus sp. (strain WH7803)</name>
    <dbReference type="NCBI Taxonomy" id="32051"/>
    <lineage>
        <taxon>Bacteria</taxon>
        <taxon>Bacillati</taxon>
        <taxon>Cyanobacteriota</taxon>
        <taxon>Cyanophyceae</taxon>
        <taxon>Synechococcales</taxon>
        <taxon>Synechococcaceae</taxon>
        <taxon>Synechococcus</taxon>
    </lineage>
</organism>
<feature type="chain" id="PRO_1000055734" description="Large ribosomal subunit protein uL14">
    <location>
        <begin position="1"/>
        <end position="121"/>
    </location>
</feature>
<comment type="function">
    <text evidence="1">Binds to 23S rRNA. Forms part of two intersubunit bridges in the 70S ribosome.</text>
</comment>
<comment type="subunit">
    <text evidence="1">Part of the 50S ribosomal subunit. Forms a cluster with proteins L3 and L19. In the 70S ribosome, L14 and L19 interact and together make contacts with the 16S rRNA in bridges B5 and B8.</text>
</comment>
<comment type="similarity">
    <text evidence="1">Belongs to the universal ribosomal protein uL14 family.</text>
</comment>
<evidence type="ECO:0000255" key="1">
    <source>
        <dbReference type="HAMAP-Rule" id="MF_01367"/>
    </source>
</evidence>
<evidence type="ECO:0000305" key="2"/>
<keyword id="KW-1185">Reference proteome</keyword>
<keyword id="KW-0687">Ribonucleoprotein</keyword>
<keyword id="KW-0689">Ribosomal protein</keyword>
<keyword id="KW-0694">RNA-binding</keyword>
<keyword id="KW-0699">rRNA-binding</keyword>
<dbReference type="EMBL" id="CT971583">
    <property type="protein sequence ID" value="CAK22850.1"/>
    <property type="molecule type" value="Genomic_DNA"/>
</dbReference>
<dbReference type="SMR" id="A5GIT5"/>
<dbReference type="STRING" id="32051.SynWH7803_0424"/>
<dbReference type="KEGG" id="syx:SynWH7803_0424"/>
<dbReference type="eggNOG" id="COG0093">
    <property type="taxonomic scope" value="Bacteria"/>
</dbReference>
<dbReference type="HOGENOM" id="CLU_095071_2_1_3"/>
<dbReference type="OrthoDB" id="9806379at2"/>
<dbReference type="Proteomes" id="UP000001566">
    <property type="component" value="Chromosome"/>
</dbReference>
<dbReference type="GO" id="GO:0022625">
    <property type="term" value="C:cytosolic large ribosomal subunit"/>
    <property type="evidence" value="ECO:0007669"/>
    <property type="project" value="TreeGrafter"/>
</dbReference>
<dbReference type="GO" id="GO:0070180">
    <property type="term" value="F:large ribosomal subunit rRNA binding"/>
    <property type="evidence" value="ECO:0007669"/>
    <property type="project" value="TreeGrafter"/>
</dbReference>
<dbReference type="GO" id="GO:0003735">
    <property type="term" value="F:structural constituent of ribosome"/>
    <property type="evidence" value="ECO:0007669"/>
    <property type="project" value="InterPro"/>
</dbReference>
<dbReference type="GO" id="GO:0006412">
    <property type="term" value="P:translation"/>
    <property type="evidence" value="ECO:0007669"/>
    <property type="project" value="UniProtKB-UniRule"/>
</dbReference>
<dbReference type="CDD" id="cd00337">
    <property type="entry name" value="Ribosomal_uL14"/>
    <property type="match status" value="1"/>
</dbReference>
<dbReference type="FunFam" id="2.40.150.20:FF:000001">
    <property type="entry name" value="50S ribosomal protein L14"/>
    <property type="match status" value="1"/>
</dbReference>
<dbReference type="Gene3D" id="2.40.150.20">
    <property type="entry name" value="Ribosomal protein L14"/>
    <property type="match status" value="1"/>
</dbReference>
<dbReference type="HAMAP" id="MF_01367">
    <property type="entry name" value="Ribosomal_uL14"/>
    <property type="match status" value="1"/>
</dbReference>
<dbReference type="InterPro" id="IPR000218">
    <property type="entry name" value="Ribosomal_uL14"/>
</dbReference>
<dbReference type="InterPro" id="IPR005745">
    <property type="entry name" value="Ribosomal_uL14_bac-type"/>
</dbReference>
<dbReference type="InterPro" id="IPR036853">
    <property type="entry name" value="Ribosomal_uL14_sf"/>
</dbReference>
<dbReference type="NCBIfam" id="TIGR01067">
    <property type="entry name" value="rplN_bact"/>
    <property type="match status" value="1"/>
</dbReference>
<dbReference type="PANTHER" id="PTHR11761">
    <property type="entry name" value="50S/60S RIBOSOMAL PROTEIN L14/L23"/>
    <property type="match status" value="1"/>
</dbReference>
<dbReference type="PANTHER" id="PTHR11761:SF3">
    <property type="entry name" value="LARGE RIBOSOMAL SUBUNIT PROTEIN UL14M"/>
    <property type="match status" value="1"/>
</dbReference>
<dbReference type="Pfam" id="PF00238">
    <property type="entry name" value="Ribosomal_L14"/>
    <property type="match status" value="1"/>
</dbReference>
<dbReference type="SMART" id="SM01374">
    <property type="entry name" value="Ribosomal_L14"/>
    <property type="match status" value="1"/>
</dbReference>
<dbReference type="SUPFAM" id="SSF50193">
    <property type="entry name" value="Ribosomal protein L14"/>
    <property type="match status" value="1"/>
</dbReference>